<reference key="1">
    <citation type="journal article" date="2003" name="Nature">
        <title>Genome sequence of Bacillus cereus and comparative analysis with Bacillus anthracis.</title>
        <authorList>
            <person name="Ivanova N."/>
            <person name="Sorokin A."/>
            <person name="Anderson I."/>
            <person name="Galleron N."/>
            <person name="Candelon B."/>
            <person name="Kapatral V."/>
            <person name="Bhattacharyya A."/>
            <person name="Reznik G."/>
            <person name="Mikhailova N."/>
            <person name="Lapidus A."/>
            <person name="Chu L."/>
            <person name="Mazur M."/>
            <person name="Goltsman E."/>
            <person name="Larsen N."/>
            <person name="D'Souza M."/>
            <person name="Walunas T."/>
            <person name="Grechkin Y."/>
            <person name="Pusch G."/>
            <person name="Haselkorn R."/>
            <person name="Fonstein M."/>
            <person name="Ehrlich S.D."/>
            <person name="Overbeek R."/>
            <person name="Kyrpides N.C."/>
        </authorList>
    </citation>
    <scope>NUCLEOTIDE SEQUENCE [LARGE SCALE GENOMIC DNA]</scope>
    <source>
        <strain>ATCC 14579 / DSM 31 / CCUG 7414 / JCM 2152 / NBRC 15305 / NCIMB 9373 / NCTC 2599 / NRRL B-3711</strain>
    </source>
</reference>
<evidence type="ECO:0000255" key="1">
    <source>
        <dbReference type="HAMAP-Rule" id="MF_00357"/>
    </source>
</evidence>
<evidence type="ECO:0000255" key="2">
    <source>
        <dbReference type="PROSITE-ProRule" id="PRU01261"/>
    </source>
</evidence>
<evidence type="ECO:0000256" key="3">
    <source>
        <dbReference type="SAM" id="MobiDB-lite"/>
    </source>
</evidence>
<protein>
    <recommendedName>
        <fullName evidence="1">Probable DNA-directed RNA polymerase subunit delta</fullName>
    </recommendedName>
    <alternativeName>
        <fullName evidence="1">RNAP delta factor</fullName>
    </alternativeName>
</protein>
<dbReference type="EMBL" id="AE016877">
    <property type="protein sequence ID" value="AAP12202.1"/>
    <property type="molecule type" value="Genomic_DNA"/>
</dbReference>
<dbReference type="RefSeq" id="NP_835001.1">
    <property type="nucleotide sequence ID" value="NC_004722.1"/>
</dbReference>
<dbReference type="RefSeq" id="WP_000346278.1">
    <property type="nucleotide sequence ID" value="NZ_CP138336.1"/>
</dbReference>
<dbReference type="SMR" id="Q814T1"/>
<dbReference type="STRING" id="226900.BC_5339"/>
<dbReference type="KEGG" id="bce:BC5339"/>
<dbReference type="PATRIC" id="fig|226900.8.peg.5513"/>
<dbReference type="HOGENOM" id="CLU_116648_1_0_9"/>
<dbReference type="OrthoDB" id="401223at2"/>
<dbReference type="Proteomes" id="UP000001417">
    <property type="component" value="Chromosome"/>
</dbReference>
<dbReference type="GO" id="GO:0000428">
    <property type="term" value="C:DNA-directed RNA polymerase complex"/>
    <property type="evidence" value="ECO:0007669"/>
    <property type="project" value="UniProtKB-KW"/>
</dbReference>
<dbReference type="GO" id="GO:0003899">
    <property type="term" value="F:DNA-directed RNA polymerase activity"/>
    <property type="evidence" value="ECO:0007669"/>
    <property type="project" value="UniProtKB-UniRule"/>
</dbReference>
<dbReference type="GO" id="GO:0006351">
    <property type="term" value="P:DNA-templated transcription"/>
    <property type="evidence" value="ECO:0007669"/>
    <property type="project" value="InterPro"/>
</dbReference>
<dbReference type="GO" id="GO:0006355">
    <property type="term" value="P:regulation of DNA-templated transcription"/>
    <property type="evidence" value="ECO:0007669"/>
    <property type="project" value="UniProtKB-UniRule"/>
</dbReference>
<dbReference type="FunFam" id="1.10.10.1250:FF:000001">
    <property type="entry name" value="Probable DNA-directed RNA polymerase subunit delta"/>
    <property type="match status" value="1"/>
</dbReference>
<dbReference type="Gene3D" id="1.10.10.1250">
    <property type="entry name" value="RNA polymerase, subunit delta, N-terminal domain"/>
    <property type="match status" value="1"/>
</dbReference>
<dbReference type="HAMAP" id="MF_00357">
    <property type="entry name" value="RNApol_bact_RpoE"/>
    <property type="match status" value="1"/>
</dbReference>
<dbReference type="InterPro" id="IPR007759">
    <property type="entry name" value="Asxl_HARE-HTH"/>
</dbReference>
<dbReference type="InterPro" id="IPR038087">
    <property type="entry name" value="RNAP_delta_N_dom_sf"/>
</dbReference>
<dbReference type="InterPro" id="IPR029757">
    <property type="entry name" value="RpoE"/>
</dbReference>
<dbReference type="NCBIfam" id="TIGR04567">
    <property type="entry name" value="RNAP_delt_lowGC"/>
    <property type="match status" value="1"/>
</dbReference>
<dbReference type="Pfam" id="PF05066">
    <property type="entry name" value="HARE-HTH"/>
    <property type="match status" value="1"/>
</dbReference>
<dbReference type="PROSITE" id="PS51913">
    <property type="entry name" value="HTH_HARE"/>
    <property type="match status" value="1"/>
</dbReference>
<proteinExistence type="inferred from homology"/>
<feature type="chain" id="PRO_0000303119" description="Probable DNA-directed RNA polymerase subunit delta">
    <location>
        <begin position="1"/>
        <end position="177"/>
    </location>
</feature>
<feature type="domain" description="HTH HARE-type" evidence="2">
    <location>
        <begin position="14"/>
        <end position="81"/>
    </location>
</feature>
<feature type="region of interest" description="Disordered" evidence="3">
    <location>
        <begin position="90"/>
        <end position="177"/>
    </location>
</feature>
<feature type="compositionally biased region" description="Acidic residues" evidence="3">
    <location>
        <begin position="106"/>
        <end position="177"/>
    </location>
</feature>
<keyword id="KW-0240">DNA-directed RNA polymerase</keyword>
<keyword id="KW-0548">Nucleotidyltransferase</keyword>
<keyword id="KW-1185">Reference proteome</keyword>
<keyword id="KW-0804">Transcription</keyword>
<keyword id="KW-0808">Transferase</keyword>
<organism>
    <name type="scientific">Bacillus cereus (strain ATCC 14579 / DSM 31 / CCUG 7414 / JCM 2152 / NBRC 15305 / NCIMB 9373 / NCTC 2599 / NRRL B-3711)</name>
    <dbReference type="NCBI Taxonomy" id="226900"/>
    <lineage>
        <taxon>Bacteria</taxon>
        <taxon>Bacillati</taxon>
        <taxon>Bacillota</taxon>
        <taxon>Bacilli</taxon>
        <taxon>Bacillales</taxon>
        <taxon>Bacillaceae</taxon>
        <taxon>Bacillus</taxon>
        <taxon>Bacillus cereus group</taxon>
    </lineage>
</organism>
<gene>
    <name evidence="1" type="primary">rpoE</name>
    <name type="ordered locus">BC_5339</name>
</gene>
<comment type="function">
    <text evidence="1">Participates in both the initiation and recycling phases of transcription. In the presence of the delta subunit, RNAP displays an increased specificity of transcription, a decreased affinity for nucleic acids, and an increased efficiency of RNA synthesis because of enhanced recycling.</text>
</comment>
<comment type="subunit">
    <text evidence="1">RNAP is composed of a core of 2 alpha, a beta and a beta' subunits. The core is associated with a delta subunit and one of several sigma factors.</text>
</comment>
<comment type="similarity">
    <text evidence="1">Belongs to the RpoE family.</text>
</comment>
<sequence length="177" mass="20837">MDFKQYSPEELKECSMIEVVHSVLGDKKQATTFNELVQEIAQVLGLSQEQVNAKIAQFYTDLNIDGRFINLGENRWGLRSWYPYEQIDEEILPQPKPKKKRKVEEDGFDDYIEEDEDDFDDADVNEDEDDDVEDLDKVLEEEDGDDDDLDDLDEDDDDFAEEELEYDETEEEEEEEL</sequence>
<name>RPOE_BACCR</name>
<accession>Q814T1</accession>